<proteinExistence type="evidence at protein level"/>
<feature type="chain" id="PRO_0000457876" description="Glucosamine 6-phosphate N-acetyltransferase">
    <location>
        <begin position="1"/>
        <end position="147"/>
    </location>
</feature>
<feature type="domain" description="N-acetyltransferase" evidence="2">
    <location>
        <begin position="7"/>
        <end position="147"/>
    </location>
</feature>
<feature type="binding site" evidence="1">
    <location>
        <position position="28"/>
    </location>
    <ligand>
        <name>D-glucosamine 6-phosphate</name>
        <dbReference type="ChEBI" id="CHEBI:58725"/>
    </ligand>
</feature>
<feature type="binding site" evidence="1">
    <location>
        <begin position="86"/>
        <end position="88"/>
    </location>
    <ligand>
        <name>D-glucosamine 6-phosphate</name>
        <dbReference type="ChEBI" id="CHEBI:58725"/>
    </ligand>
</feature>
<feature type="binding site" evidence="1">
    <location>
        <begin position="88"/>
        <end position="90"/>
    </location>
    <ligand>
        <name>acetyl-CoA</name>
        <dbReference type="ChEBI" id="CHEBI:57288"/>
    </ligand>
</feature>
<feature type="binding site" evidence="1">
    <location>
        <begin position="96"/>
        <end position="101"/>
    </location>
    <ligand>
        <name>acetyl-CoA</name>
        <dbReference type="ChEBI" id="CHEBI:57288"/>
    </ligand>
</feature>
<feature type="binding site" evidence="1">
    <location>
        <begin position="117"/>
        <end position="118"/>
    </location>
    <ligand>
        <name>D-glucosamine 6-phosphate</name>
        <dbReference type="ChEBI" id="CHEBI:58725"/>
    </ligand>
</feature>
<feature type="binding site" evidence="1">
    <location>
        <position position="122"/>
    </location>
    <ligand>
        <name>D-glucosamine 6-phosphate</name>
        <dbReference type="ChEBI" id="CHEBI:58725"/>
    </ligand>
</feature>
<feature type="binding site" evidence="1">
    <location>
        <begin position="131"/>
        <end position="133"/>
    </location>
    <ligand>
        <name>acetyl-CoA</name>
        <dbReference type="ChEBI" id="CHEBI:57288"/>
    </ligand>
</feature>
<feature type="strand" evidence="11">
    <location>
        <begin position="7"/>
        <end position="11"/>
    </location>
</feature>
<feature type="helix" evidence="11">
    <location>
        <begin position="14"/>
        <end position="16"/>
    </location>
</feature>
<feature type="helix" evidence="11">
    <location>
        <begin position="17"/>
        <end position="24"/>
    </location>
</feature>
<feature type="turn" evidence="11">
    <location>
        <begin position="25"/>
        <end position="27"/>
    </location>
</feature>
<feature type="helix" evidence="11">
    <location>
        <begin position="35"/>
        <end position="47"/>
    </location>
</feature>
<feature type="strand" evidence="11">
    <location>
        <begin position="51"/>
        <end position="57"/>
    </location>
</feature>
<feature type="turn" evidence="11">
    <location>
        <begin position="58"/>
        <end position="60"/>
    </location>
</feature>
<feature type="strand" evidence="11">
    <location>
        <begin position="63"/>
        <end position="72"/>
    </location>
</feature>
<feature type="helix" evidence="11">
    <location>
        <begin position="77"/>
        <end position="79"/>
    </location>
</feature>
<feature type="strand" evidence="11">
    <location>
        <begin position="82"/>
        <end position="90"/>
    </location>
</feature>
<feature type="helix" evidence="11">
    <location>
        <begin position="92"/>
        <end position="94"/>
    </location>
</feature>
<feature type="turn" evidence="11">
    <location>
        <begin position="95"/>
        <end position="98"/>
    </location>
</feature>
<feature type="helix" evidence="11">
    <location>
        <begin position="99"/>
        <end position="113"/>
    </location>
</feature>
<feature type="strand" evidence="11">
    <location>
        <begin position="117"/>
        <end position="123"/>
    </location>
</feature>
<feature type="turn" evidence="11">
    <location>
        <begin position="125"/>
        <end position="127"/>
    </location>
</feature>
<feature type="helix" evidence="11">
    <location>
        <begin position="128"/>
        <end position="133"/>
    </location>
</feature>
<feature type="strand" evidence="11">
    <location>
        <begin position="137"/>
        <end position="146"/>
    </location>
</feature>
<keyword id="KW-0002">3D-structure</keyword>
<keyword id="KW-0012">Acyltransferase</keyword>
<keyword id="KW-0327">Glycosome</keyword>
<keyword id="KW-0576">Peroxisome</keyword>
<keyword id="KW-0808">Transferase</keyword>
<reference evidence="8 9 10" key="1">
    <citation type="journal article" date="2011" name="Eukaryot. Cell">
        <title>Characterization, localization, essentiality, and high-resolution crystal structure of glucosamine 6-phosphate N-acetyltransferase from Trypanosoma brucei.</title>
        <authorList>
            <person name="Marino K."/>
            <person name="Guether M.L."/>
            <person name="Wernimont A.K."/>
            <person name="Qiu W."/>
            <person name="Hui R."/>
            <person name="Ferguson M.A."/>
        </authorList>
    </citation>
    <scope>NUCLEOTIDE SEQUENCE [GENOMIC DNA]</scope>
    <scope>FUNCTION</scope>
    <scope>CATALYTIC ACTIVITY</scope>
    <scope>BIOPHYSICOCHEMICAL PROPERTIES</scope>
    <scope>PATHWAY</scope>
    <scope>SUBUNIT</scope>
    <scope>SUBCELLULAR LOCATION</scope>
    <scope>GLYCOSYLATION</scope>
    <scope>DISRUPTION PHENOTYPE</scope>
    <scope>BIOTECHNOLOGY</scope>
    <scope>X-RAY CRYSTALLOGRAPHY (1.86 ANGSTROMS) OF 5-147</scope>
    <source>
        <strain evidence="5 8">427</strain>
    </source>
</reference>
<gene>
    <name evidence="5 8" type="primary">GNA1</name>
</gene>
<comment type="function">
    <text evidence="4">Involved in the biosynthesis of UDP-N-acetyl-alpha-D-glucosamine. Catalyzes the formation of N-acetyl-D-glucosamine 6-phosphate from acetyl-coenzyme A (acetyl-CoA) and D-glucosamine 6-phosphate.</text>
</comment>
<comment type="catalytic activity">
    <reaction evidence="3 4">
        <text>D-glucosamine 6-phosphate + acetyl-CoA = N-acetyl-D-glucosamine 6-phosphate + CoA + H(+)</text>
        <dbReference type="Rhea" id="RHEA:10292"/>
        <dbReference type="ChEBI" id="CHEBI:15378"/>
        <dbReference type="ChEBI" id="CHEBI:57287"/>
        <dbReference type="ChEBI" id="CHEBI:57288"/>
        <dbReference type="ChEBI" id="CHEBI:57513"/>
        <dbReference type="ChEBI" id="CHEBI:58725"/>
        <dbReference type="EC" id="2.3.1.4"/>
    </reaction>
</comment>
<comment type="biophysicochemical properties">
    <kinetics>
        <KM evidence="4">144 uM for glucosamine 6-phosphate (at pH 7.2 and room temperature)</KM>
        <KM evidence="4">234 uM for acetyl-CoA (at pH 7.2 and room temperature)</KM>
    </kinetics>
</comment>
<comment type="pathway">
    <text evidence="3 4">Nucleotide-sugar biosynthesis; UDP-N-acetyl-alpha-D-glucosamine biosynthesis; N-acetyl-alpha-D-glucosamine 1-phosphate from alpha-D-glucosamine 6-phosphate (route I): step 1/2.</text>
</comment>
<comment type="subunit">
    <text evidence="4">Homodimer.</text>
</comment>
<comment type="subcellular location">
    <subcellularLocation>
        <location evidence="4">Glycosome</location>
    </subcellularLocation>
    <text evidence="4">Predominantly located in glycosome microbodies in the bloodstream form of T.brucei.</text>
</comment>
<comment type="PTM">
    <text evidence="4">Contains poly-N-acetyllactosamines.</text>
</comment>
<comment type="disruption phenotype">
    <text evidence="4">Conditional knockout mutant of the infectious bloodstream form (BSF) of T.brucei has rapid discontinuance of growth and death by cell lysis after 48 to 72 hours under nonpermissive (without tetracycline) conditions, but grow similarly to wild-type under permissive (with tetracycline) conditions. However, commonly in trypanosomatids, conditional knockout mutants become tetracycline-independent after 10 days resuming growth, indicating the essentiality of this gene and demonstrating that there are no other routes to UDP-N-acetyl-glucosamine (UDP-GlcNAc) than via formation of N-acetyl-glucosamine 6-phosphate (GlcNAc-6P). Dramatically reduced UDP-GlcNAc levels, slightly increased UDP-glucose and UDP-galactose levels, and significantly reduced poly-N-acetyllactosamine structures under nonpermissive conditions. The glycosylation profile of the principal surface coat component, the variant surface glycoprotein (VSG), is modified under nonpermissive conditions. VSG lacks the higher-molecular-mass glycoforms and the oligomannose structures from the C-terminal N-glycosylation site.</text>
</comment>
<comment type="biotechnology">
    <text evidence="7">Potential novel drug target for African sleeping sickness as this protein is essential for the infectious bloodstream form of T.brucei. Therapeutic application depends on development of parasite-specific inhibitors, because this enzyme is also generally essential for eukaryotes.</text>
</comment>
<comment type="similarity">
    <text evidence="3">Belongs to the acetyltransferase family. GNA1 subfamily.</text>
</comment>
<organism>
    <name type="scientific">Trypanosoma brucei brucei</name>
    <dbReference type="NCBI Taxonomy" id="5702"/>
    <lineage>
        <taxon>Eukaryota</taxon>
        <taxon>Discoba</taxon>
        <taxon>Euglenozoa</taxon>
        <taxon>Kinetoplastea</taxon>
        <taxon>Metakinetoplastina</taxon>
        <taxon>Trypanosomatida</taxon>
        <taxon>Trypanosomatidae</taxon>
        <taxon>Trypanosoma</taxon>
    </lineage>
</organism>
<name>GNA1_TRYBB</name>
<evidence type="ECO:0000250" key="1">
    <source>
        <dbReference type="UniProtKB" id="P43577"/>
    </source>
</evidence>
<evidence type="ECO:0000255" key="2">
    <source>
        <dbReference type="PROSITE-ProRule" id="PRU00532"/>
    </source>
</evidence>
<evidence type="ECO:0000255" key="3">
    <source>
        <dbReference type="RuleBase" id="RU365086"/>
    </source>
</evidence>
<evidence type="ECO:0000269" key="4">
    <source>
    </source>
</evidence>
<evidence type="ECO:0000303" key="5">
    <source>
    </source>
</evidence>
<evidence type="ECO:0000305" key="6"/>
<evidence type="ECO:0000305" key="7">
    <source>
    </source>
</evidence>
<evidence type="ECO:0000312" key="8">
    <source>
        <dbReference type="EMBL" id="CBX45115.1"/>
    </source>
</evidence>
<evidence type="ECO:0007744" key="9">
    <source>
        <dbReference type="PDB" id="3FB3"/>
    </source>
</evidence>
<evidence type="ECO:0007744" key="10">
    <source>
        <dbReference type="PDB" id="3I3G"/>
    </source>
</evidence>
<evidence type="ECO:0007829" key="11">
    <source>
        <dbReference type="PDB" id="3I3G"/>
    </source>
</evidence>
<protein>
    <recommendedName>
        <fullName evidence="3 5">Glucosamine 6-phosphate N-acetyltransferase</fullName>
        <ecNumber evidence="2 3 4">2.3.1.4</ecNumber>
    </recommendedName>
    <alternativeName>
        <fullName evidence="6">Phosphoglucosamine acetylase</fullName>
    </alternativeName>
    <alternativeName>
        <fullName evidence="6">Phosphoglucosamine transacetylase</fullName>
    </alternativeName>
    <alternativeName>
        <fullName evidence="5">TbGNA1</fullName>
    </alternativeName>
</protein>
<dbReference type="EC" id="2.3.1.4" evidence="2 3 4"/>
<dbReference type="EMBL" id="FR715998">
    <property type="protein sequence ID" value="CBX45115.1"/>
    <property type="molecule type" value="Genomic_DNA"/>
</dbReference>
<dbReference type="PDB" id="3FB3">
    <property type="method" value="X-ray"/>
    <property type="resolution" value="2.35 A"/>
    <property type="chains" value="A/B=5-147"/>
</dbReference>
<dbReference type="PDB" id="3I3G">
    <property type="method" value="X-ray"/>
    <property type="resolution" value="1.86 A"/>
    <property type="chains" value="A/B=5-147"/>
</dbReference>
<dbReference type="PDBsum" id="3FB3"/>
<dbReference type="PDBsum" id="3I3G"/>
<dbReference type="SMR" id="E3Q1H1"/>
<dbReference type="VEuPathDB" id="TriTrypDB:Tb1125.11.11100"/>
<dbReference type="VEuPathDB" id="TriTrypDB:Tb427_110126500"/>
<dbReference type="VEuPathDB" id="TriTrypDB:Tb927.11.11100"/>
<dbReference type="VEuPathDB" id="TriTrypDB:Tbg972.11.12420"/>
<dbReference type="BRENDA" id="2.3.1.4">
    <property type="organism ID" value="6519"/>
</dbReference>
<dbReference type="UniPathway" id="UPA00113">
    <property type="reaction ID" value="UER00529"/>
</dbReference>
<dbReference type="EvolutionaryTrace" id="E3Q1H1"/>
<dbReference type="GO" id="GO:0020015">
    <property type="term" value="C:glycosome"/>
    <property type="evidence" value="ECO:0000314"/>
    <property type="project" value="UniProtKB"/>
</dbReference>
<dbReference type="GO" id="GO:0004343">
    <property type="term" value="F:glucosamine 6-phosphate N-acetyltransferase activity"/>
    <property type="evidence" value="ECO:0000315"/>
    <property type="project" value="UniProtKB"/>
</dbReference>
<dbReference type="GO" id="GO:0042802">
    <property type="term" value="F:identical protein binding"/>
    <property type="evidence" value="ECO:0000314"/>
    <property type="project" value="UniProtKB"/>
</dbReference>
<dbReference type="GO" id="GO:0042803">
    <property type="term" value="F:protein homodimerization activity"/>
    <property type="evidence" value="ECO:0000314"/>
    <property type="project" value="UniProtKB"/>
</dbReference>
<dbReference type="GO" id="GO:0030311">
    <property type="term" value="P:poly-N-acetyllactosamine biosynthetic process"/>
    <property type="evidence" value="ECO:0000315"/>
    <property type="project" value="UniProtKB"/>
</dbReference>
<dbReference type="GO" id="GO:0006048">
    <property type="term" value="P:UDP-N-acetylglucosamine biosynthetic process"/>
    <property type="evidence" value="ECO:0000315"/>
    <property type="project" value="UniProtKB"/>
</dbReference>
<dbReference type="CDD" id="cd04301">
    <property type="entry name" value="NAT_SF"/>
    <property type="match status" value="1"/>
</dbReference>
<dbReference type="FunFam" id="3.40.630.30:FF:000105">
    <property type="entry name" value="Glucosamine 6-phosphate N-acetyltransferase"/>
    <property type="match status" value="1"/>
</dbReference>
<dbReference type="Gene3D" id="3.40.630.30">
    <property type="match status" value="1"/>
</dbReference>
<dbReference type="InterPro" id="IPR016181">
    <property type="entry name" value="Acyl_CoA_acyltransferase"/>
</dbReference>
<dbReference type="InterPro" id="IPR000182">
    <property type="entry name" value="GNAT_dom"/>
</dbReference>
<dbReference type="InterPro" id="IPR039143">
    <property type="entry name" value="GNPNAT1-like"/>
</dbReference>
<dbReference type="PANTHER" id="PTHR13355">
    <property type="entry name" value="GLUCOSAMINE 6-PHOSPHATE N-ACETYLTRANSFERASE"/>
    <property type="match status" value="1"/>
</dbReference>
<dbReference type="PANTHER" id="PTHR13355:SF11">
    <property type="entry name" value="GLUCOSAMINE 6-PHOSPHATE N-ACETYLTRANSFERASE"/>
    <property type="match status" value="1"/>
</dbReference>
<dbReference type="Pfam" id="PF00583">
    <property type="entry name" value="Acetyltransf_1"/>
    <property type="match status" value="1"/>
</dbReference>
<dbReference type="SUPFAM" id="SSF55729">
    <property type="entry name" value="Acyl-CoA N-acyltransferases (Nat)"/>
    <property type="match status" value="1"/>
</dbReference>
<dbReference type="PROSITE" id="PS51186">
    <property type="entry name" value="GNAT"/>
    <property type="match status" value="1"/>
</dbReference>
<sequence length="147" mass="16247">MTDIVDLELRVLEESDLSSHLELLGHLTEAPPLSGVELANIADMRRRAGIVTKVFCHQPTGRIVGSASLMIQPKFTRGGRAVGHIEDVVVDPSYRGAGLGKALIMDLCEISRSKGCYKVILDSSEKSLPFYEKLGFRAHERQMRLDL</sequence>
<accession>E3Q1H1</accession>